<feature type="chain" id="PRO_0000402491" description="Protein p17">
    <location>
        <begin position="1"/>
        <end position="157"/>
    </location>
</feature>
<feature type="region of interest" description="Disordered" evidence="1">
    <location>
        <begin position="46"/>
        <end position="70"/>
    </location>
</feature>
<feature type="region of interest" description="Disordered" evidence="1">
    <location>
        <begin position="83"/>
        <end position="157"/>
    </location>
</feature>
<feature type="compositionally biased region" description="Low complexity" evidence="1">
    <location>
        <begin position="88"/>
        <end position="100"/>
    </location>
</feature>
<feature type="compositionally biased region" description="Polar residues" evidence="1">
    <location>
        <begin position="114"/>
        <end position="132"/>
    </location>
</feature>
<feature type="compositionally biased region" description="Low complexity" evidence="1">
    <location>
        <begin position="134"/>
        <end position="157"/>
    </location>
</feature>
<organismHost>
    <name type="scientific">Helicoverpa armigera</name>
    <name type="common">Cotton bollworm</name>
    <name type="synonym">Heliothis armigera</name>
    <dbReference type="NCBI Taxonomy" id="29058"/>
</organismHost>
<protein>
    <recommendedName>
        <fullName>Protein p17</fullName>
    </recommendedName>
</protein>
<gene>
    <name type="primary">p17</name>
</gene>
<organism>
    <name type="scientific">Helicoverpa armigera stunt virus</name>
    <name type="common">HaSV</name>
    <dbReference type="NCBI Taxonomy" id="37206"/>
    <lineage>
        <taxon>Viruses</taxon>
        <taxon>Riboviria</taxon>
        <taxon>Orthornavirae</taxon>
        <taxon>Kitrinoviricota</taxon>
        <taxon>Alsuviricetes</taxon>
        <taxon>Hepelivirales</taxon>
        <taxon>Alphatetraviridae</taxon>
        <taxon>Omegatetravirus</taxon>
    </lineage>
</organism>
<sequence>MSEHTIAHSITLPPGYTLALIPPEPEAGWEMLEWRHSDLTTVAEPVTFGSAPTPSPSMVEETNGVGPEGKFLPLTISPLLHKTSRKALTPTPSLSPLTSLACPNSGIGPRERSTSTPIPSAGTSSTLTQRVLQSLRAPSASTRRSLTASSSSPSTQR</sequence>
<keyword id="KW-1185">Reference proteome</keyword>
<dbReference type="EMBL" id="L37299">
    <property type="protein sequence ID" value="AAC37884.1"/>
    <property type="molecule type" value="Genomic_RNA"/>
</dbReference>
<dbReference type="RefSeq" id="NP_049236.1">
    <property type="nucleotide sequence ID" value="NC_001982.1"/>
</dbReference>
<dbReference type="GeneID" id="991181"/>
<dbReference type="KEGG" id="vg:991181"/>
<dbReference type="OrthoDB" id="41351at10239"/>
<dbReference type="Proteomes" id="UP000006711">
    <property type="component" value="Genome"/>
</dbReference>
<proteinExistence type="predicted"/>
<evidence type="ECO:0000256" key="1">
    <source>
        <dbReference type="SAM" id="MobiDB-lite"/>
    </source>
</evidence>
<name>P17_HASV</name>
<accession>Q82461</accession>
<reference key="1">
    <citation type="journal article" date="1995" name="J. Gen. Virol.">
        <title>Sequence of RNA2 of the Helicoverpa armigera stunt virus (Tetraviridae) and bacterial expression of its genes.</title>
        <authorList>
            <person name="Hanzlik T.N."/>
            <person name="Dorrian S.J."/>
            <person name="Johnson K.N."/>
            <person name="Brooks E.M."/>
            <person name="Gordon K.H."/>
        </authorList>
    </citation>
    <scope>NUCLEOTIDE SEQUENCE [GENOMIC RNA]</scope>
</reference>